<gene>
    <name evidence="1" type="primary">ubiE</name>
    <name type="ordered locus">BT_0040</name>
</gene>
<organism>
    <name type="scientific">Bartonella tribocorum (strain CIP 105476 / IBS 506)</name>
    <dbReference type="NCBI Taxonomy" id="382640"/>
    <lineage>
        <taxon>Bacteria</taxon>
        <taxon>Pseudomonadati</taxon>
        <taxon>Pseudomonadota</taxon>
        <taxon>Alphaproteobacteria</taxon>
        <taxon>Hyphomicrobiales</taxon>
        <taxon>Bartonellaceae</taxon>
        <taxon>Bartonella</taxon>
    </lineage>
</organism>
<name>UBIE_BART1</name>
<evidence type="ECO:0000255" key="1">
    <source>
        <dbReference type="HAMAP-Rule" id="MF_01813"/>
    </source>
</evidence>
<keyword id="KW-0474">Menaquinone biosynthesis</keyword>
<keyword id="KW-0489">Methyltransferase</keyword>
<keyword id="KW-0949">S-adenosyl-L-methionine</keyword>
<keyword id="KW-0808">Transferase</keyword>
<keyword id="KW-0831">Ubiquinone biosynthesis</keyword>
<sequence>MATETERVGAKGGMEHSFGFTRVDETQKQSMVDSVFHSVAENYDKMNDILSLGLHRVWKNSMVAWLSPPALSHWKVLDVAGGTGDIAFRILKASRQKAHATVLDINGSMLSVGKQRAQKNGLAPLIDFVEANAEHLPFEDQSFDAYTIAFGIRNVPHIDQALREAFRVLKPGGRFLCLEFSNVEMPWLDKIYDLWSFHAIPKLGQFIANDGDAYRYLVESIRKFPKQNDFAHMIKQAGFSRVSYRNLTGAIAALHSGWKI</sequence>
<accession>A9ILA7</accession>
<feature type="chain" id="PRO_1000088273" description="Ubiquinone/menaquinone biosynthesis C-methyltransferase UbiE">
    <location>
        <begin position="1"/>
        <end position="260"/>
    </location>
</feature>
<feature type="binding site" evidence="1">
    <location>
        <position position="83"/>
    </location>
    <ligand>
        <name>S-adenosyl-L-methionine</name>
        <dbReference type="ChEBI" id="CHEBI:59789"/>
    </ligand>
</feature>
<feature type="binding site" evidence="1">
    <location>
        <position position="104"/>
    </location>
    <ligand>
        <name>S-adenosyl-L-methionine</name>
        <dbReference type="ChEBI" id="CHEBI:59789"/>
    </ligand>
</feature>
<feature type="binding site" evidence="1">
    <location>
        <begin position="132"/>
        <end position="133"/>
    </location>
    <ligand>
        <name>S-adenosyl-L-methionine</name>
        <dbReference type="ChEBI" id="CHEBI:59789"/>
    </ligand>
</feature>
<comment type="function">
    <text evidence="1">Methyltransferase required for the conversion of demethylmenaquinol (DMKH2) to menaquinol (MKH2) and the conversion of 2-polyprenyl-6-methoxy-1,4-benzoquinol (DDMQH2) to 2-polyprenyl-3-methyl-6-methoxy-1,4-benzoquinol (DMQH2).</text>
</comment>
<comment type="catalytic activity">
    <reaction evidence="1">
        <text>a 2-demethylmenaquinol + S-adenosyl-L-methionine = a menaquinol + S-adenosyl-L-homocysteine + H(+)</text>
        <dbReference type="Rhea" id="RHEA:42640"/>
        <dbReference type="Rhea" id="RHEA-COMP:9539"/>
        <dbReference type="Rhea" id="RHEA-COMP:9563"/>
        <dbReference type="ChEBI" id="CHEBI:15378"/>
        <dbReference type="ChEBI" id="CHEBI:18151"/>
        <dbReference type="ChEBI" id="CHEBI:55437"/>
        <dbReference type="ChEBI" id="CHEBI:57856"/>
        <dbReference type="ChEBI" id="CHEBI:59789"/>
        <dbReference type="EC" id="2.1.1.163"/>
    </reaction>
</comment>
<comment type="catalytic activity">
    <reaction evidence="1">
        <text>a 2-methoxy-6-(all-trans-polyprenyl)benzene-1,4-diol + S-adenosyl-L-methionine = a 5-methoxy-2-methyl-3-(all-trans-polyprenyl)benzene-1,4-diol + S-adenosyl-L-homocysteine + H(+)</text>
        <dbReference type="Rhea" id="RHEA:28286"/>
        <dbReference type="Rhea" id="RHEA-COMP:10858"/>
        <dbReference type="Rhea" id="RHEA-COMP:10859"/>
        <dbReference type="ChEBI" id="CHEBI:15378"/>
        <dbReference type="ChEBI" id="CHEBI:57856"/>
        <dbReference type="ChEBI" id="CHEBI:59789"/>
        <dbReference type="ChEBI" id="CHEBI:84166"/>
        <dbReference type="ChEBI" id="CHEBI:84167"/>
        <dbReference type="EC" id="2.1.1.201"/>
    </reaction>
</comment>
<comment type="pathway">
    <text evidence="1">Quinol/quinone metabolism; menaquinone biosynthesis; menaquinol from 1,4-dihydroxy-2-naphthoate: step 2/2.</text>
</comment>
<comment type="pathway">
    <text evidence="1">Cofactor biosynthesis; ubiquinone biosynthesis.</text>
</comment>
<comment type="similarity">
    <text evidence="1">Belongs to the class I-like SAM-binding methyltransferase superfamily. MenG/UbiE family.</text>
</comment>
<proteinExistence type="inferred from homology"/>
<reference key="1">
    <citation type="journal article" date="2007" name="Nat. Genet.">
        <title>Genomic analysis of Bartonella identifies type IV secretion systems as host adaptability factors.</title>
        <authorList>
            <person name="Saenz H.L."/>
            <person name="Engel P."/>
            <person name="Stoeckli M.C."/>
            <person name="Lanz C."/>
            <person name="Raddatz G."/>
            <person name="Vayssier-Taussat M."/>
            <person name="Birtles R."/>
            <person name="Schuster S.C."/>
            <person name="Dehio C."/>
        </authorList>
    </citation>
    <scope>NUCLEOTIDE SEQUENCE [LARGE SCALE GENOMIC DNA]</scope>
    <source>
        <strain>CIP 105476 / IBS 506</strain>
    </source>
</reference>
<dbReference type="EC" id="2.1.1.163" evidence="1"/>
<dbReference type="EC" id="2.1.1.201" evidence="1"/>
<dbReference type="EMBL" id="AM260525">
    <property type="protein sequence ID" value="CAK00543.1"/>
    <property type="molecule type" value="Genomic_DNA"/>
</dbReference>
<dbReference type="RefSeq" id="WP_012230327.1">
    <property type="nucleotide sequence ID" value="NC_010161.1"/>
</dbReference>
<dbReference type="SMR" id="A9ILA7"/>
<dbReference type="KEGG" id="btr:BT_0040"/>
<dbReference type="eggNOG" id="COG2226">
    <property type="taxonomic scope" value="Bacteria"/>
</dbReference>
<dbReference type="HOGENOM" id="CLU_037990_0_0_5"/>
<dbReference type="UniPathway" id="UPA00079">
    <property type="reaction ID" value="UER00169"/>
</dbReference>
<dbReference type="UniPathway" id="UPA00232"/>
<dbReference type="Proteomes" id="UP000001592">
    <property type="component" value="Chromosome"/>
</dbReference>
<dbReference type="GO" id="GO:0008425">
    <property type="term" value="F:2-methoxy-6-polyprenyl-1,4-benzoquinol methyltransferase activity"/>
    <property type="evidence" value="ECO:0007669"/>
    <property type="project" value="UniProtKB-UniRule"/>
</dbReference>
<dbReference type="GO" id="GO:0043770">
    <property type="term" value="F:demethylmenaquinone methyltransferase activity"/>
    <property type="evidence" value="ECO:0007669"/>
    <property type="project" value="UniProtKB-UniRule"/>
</dbReference>
<dbReference type="GO" id="GO:0009060">
    <property type="term" value="P:aerobic respiration"/>
    <property type="evidence" value="ECO:0007669"/>
    <property type="project" value="UniProtKB-UniRule"/>
</dbReference>
<dbReference type="GO" id="GO:0009234">
    <property type="term" value="P:menaquinone biosynthetic process"/>
    <property type="evidence" value="ECO:0007669"/>
    <property type="project" value="UniProtKB-UniRule"/>
</dbReference>
<dbReference type="GO" id="GO:0032259">
    <property type="term" value="P:methylation"/>
    <property type="evidence" value="ECO:0007669"/>
    <property type="project" value="UniProtKB-KW"/>
</dbReference>
<dbReference type="CDD" id="cd02440">
    <property type="entry name" value="AdoMet_MTases"/>
    <property type="match status" value="1"/>
</dbReference>
<dbReference type="FunFam" id="3.40.50.150:FF:000064">
    <property type="entry name" value="2-methoxy-6-polyprenyl-1,4-benzoquinol methylase, mitochondrial"/>
    <property type="match status" value="1"/>
</dbReference>
<dbReference type="Gene3D" id="3.40.50.150">
    <property type="entry name" value="Vaccinia Virus protein VP39"/>
    <property type="match status" value="1"/>
</dbReference>
<dbReference type="HAMAP" id="MF_01813">
    <property type="entry name" value="MenG_UbiE_methyltr"/>
    <property type="match status" value="1"/>
</dbReference>
<dbReference type="InterPro" id="IPR029063">
    <property type="entry name" value="SAM-dependent_MTases_sf"/>
</dbReference>
<dbReference type="InterPro" id="IPR004033">
    <property type="entry name" value="UbiE/COQ5_MeTrFase"/>
</dbReference>
<dbReference type="InterPro" id="IPR023576">
    <property type="entry name" value="UbiE/COQ5_MeTrFase_CS"/>
</dbReference>
<dbReference type="NCBIfam" id="TIGR01934">
    <property type="entry name" value="MenG_MenH_UbiE"/>
    <property type="match status" value="1"/>
</dbReference>
<dbReference type="NCBIfam" id="NF001242">
    <property type="entry name" value="PRK00216.1-3"/>
    <property type="match status" value="1"/>
</dbReference>
<dbReference type="NCBIfam" id="NF001244">
    <property type="entry name" value="PRK00216.1-5"/>
    <property type="match status" value="1"/>
</dbReference>
<dbReference type="PANTHER" id="PTHR43591:SF24">
    <property type="entry name" value="2-METHOXY-6-POLYPRENYL-1,4-BENZOQUINOL METHYLASE, MITOCHONDRIAL"/>
    <property type="match status" value="1"/>
</dbReference>
<dbReference type="PANTHER" id="PTHR43591">
    <property type="entry name" value="METHYLTRANSFERASE"/>
    <property type="match status" value="1"/>
</dbReference>
<dbReference type="Pfam" id="PF01209">
    <property type="entry name" value="Ubie_methyltran"/>
    <property type="match status" value="1"/>
</dbReference>
<dbReference type="SUPFAM" id="SSF53335">
    <property type="entry name" value="S-adenosyl-L-methionine-dependent methyltransferases"/>
    <property type="match status" value="1"/>
</dbReference>
<dbReference type="PROSITE" id="PS51608">
    <property type="entry name" value="SAM_MT_UBIE"/>
    <property type="match status" value="1"/>
</dbReference>
<dbReference type="PROSITE" id="PS01183">
    <property type="entry name" value="UBIE_1"/>
    <property type="match status" value="1"/>
</dbReference>
<dbReference type="PROSITE" id="PS01184">
    <property type="entry name" value="UBIE_2"/>
    <property type="match status" value="1"/>
</dbReference>
<protein>
    <recommendedName>
        <fullName evidence="1">Ubiquinone/menaquinone biosynthesis C-methyltransferase UbiE</fullName>
        <ecNumber evidence="1">2.1.1.163</ecNumber>
        <ecNumber evidence="1">2.1.1.201</ecNumber>
    </recommendedName>
    <alternativeName>
        <fullName evidence="1">2-methoxy-6-polyprenyl-1,4-benzoquinol methylase</fullName>
    </alternativeName>
    <alternativeName>
        <fullName evidence="1">Demethylmenaquinone methyltransferase</fullName>
    </alternativeName>
</protein>